<accession>C0JAU3</accession>
<organism>
    <name type="scientific">Loxosceles apachea</name>
    <name type="common">Apache recluse spider</name>
    <dbReference type="NCBI Taxonomy" id="571518"/>
    <lineage>
        <taxon>Eukaryota</taxon>
        <taxon>Metazoa</taxon>
        <taxon>Ecdysozoa</taxon>
        <taxon>Arthropoda</taxon>
        <taxon>Chelicerata</taxon>
        <taxon>Arachnida</taxon>
        <taxon>Araneae</taxon>
        <taxon>Araneomorphae</taxon>
        <taxon>Haplogynae</taxon>
        <taxon>Scytodoidea</taxon>
        <taxon>Sicariidae</taxon>
        <taxon>Loxosceles</taxon>
    </lineage>
</organism>
<proteinExistence type="evidence at transcript level"/>
<reference key="1">
    <citation type="journal article" date="2009" name="Mol. Biol. Evol.">
        <title>Molecular evolution, functional variation, and proposed nomenclature of the gene family that includes sphingomyelinase D in sicariid spider venoms.</title>
        <authorList>
            <person name="Binford G.J."/>
            <person name="Bodner M.R."/>
            <person name="Cordes M.H."/>
            <person name="Baldwin K.L."/>
            <person name="Rynerson M.R."/>
            <person name="Burns S.N."/>
            <person name="Zobel-Thropp P.A."/>
        </authorList>
    </citation>
    <scope>NUCLEOTIDE SEQUENCE [MRNA]</scope>
    <scope>NOMENCLATURE</scope>
</reference>
<comment type="function">
    <text evidence="1 3">Dermonecrotic toxins cleave the phosphodiester linkage between the phosphate and headgroup of certain phospholipids (sphingolipid and lysolipid substrates), forming an alcohol (often choline) and a cyclic phosphate (By similarity). This toxin acts on sphingomyelin (SM) (By similarity). It may also act on ceramide phosphoethanolamine (CPE), lysophosphatidylcholine (LPC) and lysophosphatidylethanolamine (LPE), but not on lysophosphatidylserine (LPS), and lysophosphatidylglycerol (LPG) (By similarity). It acts by transphosphatidylation, releasing exclusively cyclic phosphate products as second products (By similarity). Induces dermonecrosis, hemolysis, increased vascular permeability, edema, inflammatory response, and platelet aggregation (By similarity).</text>
</comment>
<comment type="catalytic activity">
    <reaction evidence="1">
        <text>an N-(acyl)-sphingosylphosphocholine = an N-(acyl)-sphingosyl-1,3-cyclic phosphate + choline</text>
        <dbReference type="Rhea" id="RHEA:60652"/>
        <dbReference type="ChEBI" id="CHEBI:15354"/>
        <dbReference type="ChEBI" id="CHEBI:64583"/>
        <dbReference type="ChEBI" id="CHEBI:143892"/>
    </reaction>
</comment>
<comment type="catalytic activity">
    <reaction evidence="1">
        <text>an N-(acyl)-sphingosylphosphoethanolamine = an N-(acyl)-sphingosyl-1,3-cyclic phosphate + ethanolamine</text>
        <dbReference type="Rhea" id="RHEA:60648"/>
        <dbReference type="ChEBI" id="CHEBI:57603"/>
        <dbReference type="ChEBI" id="CHEBI:143891"/>
        <dbReference type="ChEBI" id="CHEBI:143892"/>
    </reaction>
</comment>
<comment type="catalytic activity">
    <reaction evidence="1">
        <text>a 1-acyl-sn-glycero-3-phosphocholine = a 1-acyl-sn-glycero-2,3-cyclic phosphate + choline</text>
        <dbReference type="Rhea" id="RHEA:60700"/>
        <dbReference type="ChEBI" id="CHEBI:15354"/>
        <dbReference type="ChEBI" id="CHEBI:58168"/>
        <dbReference type="ChEBI" id="CHEBI:143947"/>
    </reaction>
</comment>
<comment type="catalytic activity">
    <reaction evidence="1">
        <text>a 1-acyl-sn-glycero-3-phosphoethanolamine = a 1-acyl-sn-glycero-2,3-cyclic phosphate + ethanolamine</text>
        <dbReference type="Rhea" id="RHEA:60704"/>
        <dbReference type="ChEBI" id="CHEBI:57603"/>
        <dbReference type="ChEBI" id="CHEBI:64381"/>
        <dbReference type="ChEBI" id="CHEBI:143947"/>
    </reaction>
</comment>
<comment type="cofactor">
    <cofactor evidence="5">
        <name>Mg(2+)</name>
        <dbReference type="ChEBI" id="CHEBI:18420"/>
    </cofactor>
    <text evidence="5">Binds 1 Mg(2+) ion per subunit.</text>
</comment>
<comment type="subcellular location">
    <subcellularLocation>
        <location evidence="9">Secreted</location>
    </subcellularLocation>
</comment>
<comment type="tissue specificity">
    <text evidence="9">Expressed by the venom gland.</text>
</comment>
<comment type="similarity">
    <text evidence="8">Belongs to the arthropod phospholipase D family. Class II subfamily.</text>
</comment>
<comment type="caution">
    <text evidence="1 2 4">The most common activity assay for dermonecrotic toxins detects enzymatic activity by monitoring choline release from substrate. Liberation of choline from sphingomyelin (SM) or lysophosphatidylcholine (LPC) is commonly assumed to result from substrate hydrolysis, giving either ceramide-1-phosphate (C1P) or lysophosphatidic acid (LPA), respectively, as a second product. However, two studies from Lajoie and colleagues (2013 and 2015) report the observation of exclusive formation of cyclic phosphate products as second products, resulting from intramolecular transphosphatidylation. Cyclic phosphates have vastly different biological properties from their monoester counterparts, and they may be relevant to the pathology of brown spider envenomation.</text>
</comment>
<keyword id="KW-0204">Cytolysis</keyword>
<keyword id="KW-1061">Dermonecrotic toxin</keyword>
<keyword id="KW-1015">Disulfide bond</keyword>
<keyword id="KW-0325">Glycoprotein</keyword>
<keyword id="KW-0354">Hemolysis</keyword>
<keyword id="KW-0442">Lipid degradation</keyword>
<keyword id="KW-0443">Lipid metabolism</keyword>
<keyword id="KW-0456">Lyase</keyword>
<keyword id="KW-0460">Magnesium</keyword>
<keyword id="KW-0479">Metal-binding</keyword>
<keyword id="KW-0964">Secreted</keyword>
<keyword id="KW-0800">Toxin</keyword>
<name>A1L_LOXAP</name>
<feature type="chain" id="PRO_0000392797" description="Dermonecrotic toxin LapSicTox-alphaIB2">
    <location>
        <begin position="1" status="less than"/>
        <end position="273"/>
    </location>
</feature>
<feature type="active site" evidence="5">
    <location>
        <position position="5"/>
    </location>
</feature>
<feature type="active site" description="Nucleophile" evidence="5">
    <location>
        <position position="41"/>
    </location>
</feature>
<feature type="binding site" evidence="5">
    <location>
        <position position="25"/>
    </location>
    <ligand>
        <name>Mg(2+)</name>
        <dbReference type="ChEBI" id="CHEBI:18420"/>
    </ligand>
</feature>
<feature type="binding site" evidence="5">
    <location>
        <position position="27"/>
    </location>
    <ligand>
        <name>Mg(2+)</name>
        <dbReference type="ChEBI" id="CHEBI:18420"/>
    </ligand>
</feature>
<feature type="binding site" evidence="5">
    <location>
        <position position="85"/>
    </location>
    <ligand>
        <name>Mg(2+)</name>
        <dbReference type="ChEBI" id="CHEBI:18420"/>
    </ligand>
</feature>
<feature type="glycosylation site" description="N-linked (GlcNAc...) asparagine" evidence="6">
    <location>
        <position position="250"/>
    </location>
</feature>
<feature type="disulfide bond" evidence="3">
    <location>
        <begin position="45"/>
        <end position="51"/>
    </location>
</feature>
<feature type="disulfide bond" evidence="3">
    <location>
        <begin position="47"/>
        <end position="190"/>
    </location>
</feature>
<feature type="non-terminal residue">
    <location>
        <position position="1"/>
    </location>
</feature>
<evidence type="ECO:0000250" key="1">
    <source>
        <dbReference type="UniProtKB" id="A0A0D4WTV1"/>
    </source>
</evidence>
<evidence type="ECO:0000250" key="2">
    <source>
        <dbReference type="UniProtKB" id="A0A0D4WV12"/>
    </source>
</evidence>
<evidence type="ECO:0000250" key="3">
    <source>
        <dbReference type="UniProtKB" id="P0CE80"/>
    </source>
</evidence>
<evidence type="ECO:0000250" key="4">
    <source>
        <dbReference type="UniProtKB" id="Q4ZFU2"/>
    </source>
</evidence>
<evidence type="ECO:0000250" key="5">
    <source>
        <dbReference type="UniProtKB" id="Q8I914"/>
    </source>
</evidence>
<evidence type="ECO:0000255" key="6"/>
<evidence type="ECO:0000303" key="7">
    <source>
    </source>
</evidence>
<evidence type="ECO:0000305" key="8"/>
<evidence type="ECO:0000305" key="9">
    <source>
    </source>
</evidence>
<protein>
    <recommendedName>
        <fullName evidence="7">Dermonecrotic toxin LapSicTox-alphaIB2</fullName>
        <ecNumber evidence="4">4.6.1.-</ecNumber>
    </recommendedName>
    <alternativeName>
        <fullName>Phospholipase D</fullName>
        <shortName>PLD</shortName>
    </alternativeName>
    <alternativeName>
        <fullName>Sphingomyelin phosphodiesterase D</fullName>
        <shortName>SMD</shortName>
        <shortName>SMase D</shortName>
        <shortName>Sphingomyelinase D</shortName>
    </alternativeName>
</protein>
<dbReference type="EC" id="4.6.1.-" evidence="4"/>
<dbReference type="EMBL" id="FJ171378">
    <property type="protein sequence ID" value="ACN48874.1"/>
    <property type="molecule type" value="mRNA"/>
</dbReference>
<dbReference type="SMR" id="C0JAU3"/>
<dbReference type="GO" id="GO:0005576">
    <property type="term" value="C:extracellular region"/>
    <property type="evidence" value="ECO:0007669"/>
    <property type="project" value="UniProtKB-SubCell"/>
</dbReference>
<dbReference type="GO" id="GO:0016829">
    <property type="term" value="F:lyase activity"/>
    <property type="evidence" value="ECO:0007669"/>
    <property type="project" value="UniProtKB-KW"/>
</dbReference>
<dbReference type="GO" id="GO:0046872">
    <property type="term" value="F:metal ion binding"/>
    <property type="evidence" value="ECO:0007669"/>
    <property type="project" value="UniProtKB-KW"/>
</dbReference>
<dbReference type="GO" id="GO:0008081">
    <property type="term" value="F:phosphoric diester hydrolase activity"/>
    <property type="evidence" value="ECO:0007669"/>
    <property type="project" value="InterPro"/>
</dbReference>
<dbReference type="GO" id="GO:0090729">
    <property type="term" value="F:toxin activity"/>
    <property type="evidence" value="ECO:0007669"/>
    <property type="project" value="UniProtKB-KW"/>
</dbReference>
<dbReference type="GO" id="GO:0031640">
    <property type="term" value="P:killing of cells of another organism"/>
    <property type="evidence" value="ECO:0007669"/>
    <property type="project" value="UniProtKB-KW"/>
</dbReference>
<dbReference type="GO" id="GO:0016042">
    <property type="term" value="P:lipid catabolic process"/>
    <property type="evidence" value="ECO:0007669"/>
    <property type="project" value="UniProtKB-KW"/>
</dbReference>
<dbReference type="CDD" id="cd08576">
    <property type="entry name" value="GDPD_like_SMaseD_PLD"/>
    <property type="match status" value="1"/>
</dbReference>
<dbReference type="Gene3D" id="3.20.20.190">
    <property type="entry name" value="Phosphatidylinositol (PI) phosphodiesterase"/>
    <property type="match status" value="1"/>
</dbReference>
<dbReference type="InterPro" id="IPR017946">
    <property type="entry name" value="PLC-like_Pdiesterase_TIM-brl"/>
</dbReference>
<dbReference type="Pfam" id="PF13653">
    <property type="entry name" value="GDPD_2"/>
    <property type="match status" value="1"/>
</dbReference>
<dbReference type="SUPFAM" id="SSF51695">
    <property type="entry name" value="PLC-like phosphodiesterases"/>
    <property type="match status" value="1"/>
</dbReference>
<sequence length="273" mass="30975">WIMGHMVNANYQIDEFVNLGANSIETDVSFDSSANPEYTYHGVPCDCRRWCKKWEYFNNFLKALRKATTPGDSKYHEKLVLVVFDLKTGSLYDNQAYDAGKKLAKNLLQHYWNNGNNGGRAYIVLSIPNLAHYKLITGFKETLKTEGHPELMEKVGYDFSGNDDIGDVANAYKKAGVTGHVWQSDGITNCLLRGLDRVRKAVANRDSSNGYINKVYYWTVDKRQSTRDALDAGVDGIMTNYPDVIADVLNESAYKAKFRIASYDDNPWETFKN</sequence>